<geneLocation type="mitochondrion"/>
<evidence type="ECO:0000250" key="1">
    <source>
        <dbReference type="UniProtKB" id="P00403"/>
    </source>
</evidence>
<evidence type="ECO:0000250" key="2">
    <source>
        <dbReference type="UniProtKB" id="P00406"/>
    </source>
</evidence>
<evidence type="ECO:0000250" key="3">
    <source>
        <dbReference type="UniProtKB" id="P00410"/>
    </source>
</evidence>
<evidence type="ECO:0000250" key="4">
    <source>
        <dbReference type="UniProtKB" id="P68530"/>
    </source>
</evidence>
<evidence type="ECO:0000305" key="5"/>
<dbReference type="EC" id="7.1.1.9"/>
<dbReference type="EMBL" id="AF028211">
    <property type="protein sequence ID" value="AAC00104.1"/>
    <property type="molecule type" value="Genomic_DNA"/>
</dbReference>
<dbReference type="SMR" id="O47670"/>
<dbReference type="GO" id="GO:0005743">
    <property type="term" value="C:mitochondrial inner membrane"/>
    <property type="evidence" value="ECO:0007669"/>
    <property type="project" value="UniProtKB-SubCell"/>
</dbReference>
<dbReference type="GO" id="GO:0045277">
    <property type="term" value="C:respiratory chain complex IV"/>
    <property type="evidence" value="ECO:0000250"/>
    <property type="project" value="UniProtKB"/>
</dbReference>
<dbReference type="GO" id="GO:0005507">
    <property type="term" value="F:copper ion binding"/>
    <property type="evidence" value="ECO:0007669"/>
    <property type="project" value="InterPro"/>
</dbReference>
<dbReference type="GO" id="GO:0004129">
    <property type="term" value="F:cytochrome-c oxidase activity"/>
    <property type="evidence" value="ECO:0007669"/>
    <property type="project" value="UniProtKB-EC"/>
</dbReference>
<dbReference type="GO" id="GO:0042773">
    <property type="term" value="P:ATP synthesis coupled electron transport"/>
    <property type="evidence" value="ECO:0007669"/>
    <property type="project" value="TreeGrafter"/>
</dbReference>
<dbReference type="CDD" id="cd13912">
    <property type="entry name" value="CcO_II_C"/>
    <property type="match status" value="1"/>
</dbReference>
<dbReference type="FunFam" id="1.10.287.90:FF:000001">
    <property type="entry name" value="Cytochrome c oxidase subunit 2"/>
    <property type="match status" value="1"/>
</dbReference>
<dbReference type="FunFam" id="2.60.40.420:FF:000001">
    <property type="entry name" value="Cytochrome c oxidase subunit 2"/>
    <property type="match status" value="1"/>
</dbReference>
<dbReference type="Gene3D" id="1.10.287.90">
    <property type="match status" value="1"/>
</dbReference>
<dbReference type="Gene3D" id="2.60.40.420">
    <property type="entry name" value="Cupredoxins - blue copper proteins"/>
    <property type="match status" value="1"/>
</dbReference>
<dbReference type="InterPro" id="IPR045187">
    <property type="entry name" value="CcO_II"/>
</dbReference>
<dbReference type="InterPro" id="IPR002429">
    <property type="entry name" value="CcO_II-like_C"/>
</dbReference>
<dbReference type="InterPro" id="IPR034210">
    <property type="entry name" value="CcO_II_C"/>
</dbReference>
<dbReference type="InterPro" id="IPR001505">
    <property type="entry name" value="Copper_CuA"/>
</dbReference>
<dbReference type="InterPro" id="IPR008972">
    <property type="entry name" value="Cupredoxin"/>
</dbReference>
<dbReference type="InterPro" id="IPR014222">
    <property type="entry name" value="Cyt_c_oxidase_su2"/>
</dbReference>
<dbReference type="InterPro" id="IPR011759">
    <property type="entry name" value="Cyt_c_oxidase_su2_TM_dom"/>
</dbReference>
<dbReference type="InterPro" id="IPR036257">
    <property type="entry name" value="Cyt_c_oxidase_su2_TM_sf"/>
</dbReference>
<dbReference type="NCBIfam" id="TIGR02866">
    <property type="entry name" value="CoxB"/>
    <property type="match status" value="1"/>
</dbReference>
<dbReference type="PANTHER" id="PTHR22888:SF9">
    <property type="entry name" value="CYTOCHROME C OXIDASE SUBUNIT 2"/>
    <property type="match status" value="1"/>
</dbReference>
<dbReference type="PANTHER" id="PTHR22888">
    <property type="entry name" value="CYTOCHROME C OXIDASE, SUBUNIT II"/>
    <property type="match status" value="1"/>
</dbReference>
<dbReference type="Pfam" id="PF00116">
    <property type="entry name" value="COX2"/>
    <property type="match status" value="1"/>
</dbReference>
<dbReference type="Pfam" id="PF02790">
    <property type="entry name" value="COX2_TM"/>
    <property type="match status" value="1"/>
</dbReference>
<dbReference type="PRINTS" id="PR01166">
    <property type="entry name" value="CYCOXIDASEII"/>
</dbReference>
<dbReference type="SUPFAM" id="SSF49503">
    <property type="entry name" value="Cupredoxins"/>
    <property type="match status" value="1"/>
</dbReference>
<dbReference type="SUPFAM" id="SSF81464">
    <property type="entry name" value="Cytochrome c oxidase subunit II-like, transmembrane region"/>
    <property type="match status" value="1"/>
</dbReference>
<dbReference type="PROSITE" id="PS00078">
    <property type="entry name" value="COX2"/>
    <property type="match status" value="1"/>
</dbReference>
<dbReference type="PROSITE" id="PS50857">
    <property type="entry name" value="COX2_CUA"/>
    <property type="match status" value="1"/>
</dbReference>
<dbReference type="PROSITE" id="PS50999">
    <property type="entry name" value="COX2_TM"/>
    <property type="match status" value="1"/>
</dbReference>
<organism>
    <name type="scientific">Chrysocyon brachyurus</name>
    <name type="common">Maned wolf</name>
    <dbReference type="NCBI Taxonomy" id="68728"/>
    <lineage>
        <taxon>Eukaryota</taxon>
        <taxon>Metazoa</taxon>
        <taxon>Chordata</taxon>
        <taxon>Craniata</taxon>
        <taxon>Vertebrata</taxon>
        <taxon>Euteleostomi</taxon>
        <taxon>Mammalia</taxon>
        <taxon>Eutheria</taxon>
        <taxon>Laurasiatheria</taxon>
        <taxon>Carnivora</taxon>
        <taxon>Caniformia</taxon>
        <taxon>Canidae</taxon>
        <taxon>Chrysocyon</taxon>
    </lineage>
</organism>
<gene>
    <name type="primary">MT-CO2</name>
    <name type="synonym">COII</name>
    <name type="synonym">COX2</name>
    <name type="synonym">COXII</name>
    <name type="synonym">MTCO2</name>
</gene>
<keyword id="KW-0186">Copper</keyword>
<keyword id="KW-0249">Electron transport</keyword>
<keyword id="KW-0460">Magnesium</keyword>
<keyword id="KW-0472">Membrane</keyword>
<keyword id="KW-0479">Metal-binding</keyword>
<keyword id="KW-0496">Mitochondrion</keyword>
<keyword id="KW-0999">Mitochondrion inner membrane</keyword>
<keyword id="KW-0597">Phosphoprotein</keyword>
<keyword id="KW-0679">Respiratory chain</keyword>
<keyword id="KW-1278">Translocase</keyword>
<keyword id="KW-0812">Transmembrane</keyword>
<keyword id="KW-1133">Transmembrane helix</keyword>
<keyword id="KW-0813">Transport</keyword>
<proteinExistence type="inferred from homology"/>
<accession>O47670</accession>
<feature type="chain" id="PRO_0000183554" description="Cytochrome c oxidase subunit 2">
    <location>
        <begin position="1"/>
        <end position="227"/>
    </location>
</feature>
<feature type="topological domain" description="Mitochondrial intermembrane" evidence="4">
    <location>
        <begin position="1"/>
        <end position="14"/>
    </location>
</feature>
<feature type="transmembrane region" description="Helical; Name=I" evidence="4">
    <location>
        <begin position="15"/>
        <end position="45"/>
    </location>
</feature>
<feature type="topological domain" description="Mitochondrial matrix" evidence="4">
    <location>
        <begin position="46"/>
        <end position="59"/>
    </location>
</feature>
<feature type="transmembrane region" description="Helical; Name=II" evidence="4">
    <location>
        <begin position="60"/>
        <end position="87"/>
    </location>
</feature>
<feature type="topological domain" description="Mitochondrial intermembrane" evidence="4">
    <location>
        <begin position="88"/>
        <end position="227"/>
    </location>
</feature>
<feature type="binding site" evidence="4">
    <location>
        <position position="161"/>
    </location>
    <ligand>
        <name>Cu cation</name>
        <dbReference type="ChEBI" id="CHEBI:23378"/>
        <label>A1</label>
    </ligand>
</feature>
<feature type="binding site" evidence="4">
    <location>
        <position position="196"/>
    </location>
    <ligand>
        <name>Cu cation</name>
        <dbReference type="ChEBI" id="CHEBI:23378"/>
        <label>A1</label>
    </ligand>
</feature>
<feature type="binding site" evidence="4">
    <location>
        <position position="196"/>
    </location>
    <ligand>
        <name>Cu cation</name>
        <dbReference type="ChEBI" id="CHEBI:23378"/>
        <label>A2</label>
    </ligand>
</feature>
<feature type="binding site" evidence="4">
    <location>
        <position position="198"/>
    </location>
    <ligand>
        <name>Cu cation</name>
        <dbReference type="ChEBI" id="CHEBI:23378"/>
        <label>A2</label>
    </ligand>
</feature>
<feature type="binding site" evidence="4">
    <location>
        <position position="198"/>
    </location>
    <ligand>
        <name>Mg(2+)</name>
        <dbReference type="ChEBI" id="CHEBI:18420"/>
        <note>ligand shared with MT-CO1</note>
    </ligand>
</feature>
<feature type="binding site" evidence="4">
    <location>
        <position position="200"/>
    </location>
    <ligand>
        <name>Cu cation</name>
        <dbReference type="ChEBI" id="CHEBI:23378"/>
        <label>A1</label>
    </ligand>
</feature>
<feature type="binding site" evidence="4">
    <location>
        <position position="200"/>
    </location>
    <ligand>
        <name>Cu cation</name>
        <dbReference type="ChEBI" id="CHEBI:23378"/>
        <label>A2</label>
    </ligand>
</feature>
<feature type="binding site" evidence="4">
    <location>
        <position position="204"/>
    </location>
    <ligand>
        <name>Cu cation</name>
        <dbReference type="ChEBI" id="CHEBI:23378"/>
        <label>A2</label>
    </ligand>
</feature>
<feature type="binding site" evidence="4">
    <location>
        <position position="207"/>
    </location>
    <ligand>
        <name>Cu cation</name>
        <dbReference type="ChEBI" id="CHEBI:23378"/>
        <label>A1</label>
    </ligand>
</feature>
<feature type="modified residue" description="Phosphotyrosine" evidence="2">
    <location>
        <position position="218"/>
    </location>
</feature>
<reference key="1">
    <citation type="journal article" date="1997" name="Syst. Biol.">
        <title>Molecular systematics of the Canidae.</title>
        <authorList>
            <person name="Wayne R.K."/>
            <person name="Geffen E."/>
            <person name="Girman D.J."/>
            <person name="Koepfli K.-P."/>
            <person name="Lau L.M."/>
            <person name="Marshall C.R."/>
        </authorList>
    </citation>
    <scope>NUCLEOTIDE SEQUENCE [GENOMIC DNA]</scope>
</reference>
<protein>
    <recommendedName>
        <fullName>Cytochrome c oxidase subunit 2</fullName>
        <ecNumber>7.1.1.9</ecNumber>
    </recommendedName>
    <alternativeName>
        <fullName>Cytochrome c oxidase polypeptide II</fullName>
    </alternativeName>
</protein>
<sequence length="227" mass="26009">MAYPFQLGLQDATSPIMEELLHFHDHTLMIVFLISSLVLYIISSMLTTKLTHTSTMDAQEVETVWTILPAIILVLIALPSLRILYMMDETNNPSLTVKTMGHQWYWSYEYTDYEDLNFDSYMIPTQELKPGELRLLEVDNRVVLPMEMTIRMLISSEDVLHSWAVPSLGLKTDAIPGRLNQTTLMAMRPGLYYGQCSEICGSNHSFMPIVLEMVPLSYFETWSALMV</sequence>
<name>COX2_CHRBR</name>
<comment type="function">
    <text evidence="3">Component of the cytochrome c oxidase, the last enzyme in the mitochondrial electron transport chain which drives oxidative phosphorylation. The respiratory chain contains 3 multisubunit complexes succinate dehydrogenase (complex II, CII), ubiquinol-cytochrome c oxidoreductase (cytochrome b-c1 complex, complex III, CIII) and cytochrome c oxidase (complex IV, CIV), that cooperate to transfer electrons derived from NADH and succinate to molecular oxygen, creating an electrochemical gradient over the inner membrane that drives transmembrane transport and the ATP synthase. Cytochrome c oxidase is the component of the respiratory chain that catalyzes the reduction of oxygen to water. Electrons originating from reduced cytochrome c in the intermembrane space (IMS) are transferred via the dinuclear copper A center (CU(A)) of subunit 2 and heme A of subunit 1 to the active site in subunit 1, a binuclear center (BNC) formed by heme A3 and copper B (CU(B)). The BNC reduces molecular oxygen to 2 water molecules using 4 electrons from cytochrome c in the IMS and 4 protons from the mitochondrial matrix.</text>
</comment>
<comment type="catalytic activity">
    <reaction evidence="3">
        <text>4 Fe(II)-[cytochrome c] + O2 + 8 H(+)(in) = 4 Fe(III)-[cytochrome c] + 2 H2O + 4 H(+)(out)</text>
        <dbReference type="Rhea" id="RHEA:11436"/>
        <dbReference type="Rhea" id="RHEA-COMP:10350"/>
        <dbReference type="Rhea" id="RHEA-COMP:14399"/>
        <dbReference type="ChEBI" id="CHEBI:15377"/>
        <dbReference type="ChEBI" id="CHEBI:15378"/>
        <dbReference type="ChEBI" id="CHEBI:15379"/>
        <dbReference type="ChEBI" id="CHEBI:29033"/>
        <dbReference type="ChEBI" id="CHEBI:29034"/>
        <dbReference type="EC" id="7.1.1.9"/>
    </reaction>
    <physiologicalReaction direction="left-to-right" evidence="3">
        <dbReference type="Rhea" id="RHEA:11437"/>
    </physiologicalReaction>
</comment>
<comment type="cofactor">
    <cofactor evidence="4">
        <name>Cu cation</name>
        <dbReference type="ChEBI" id="CHEBI:23378"/>
    </cofactor>
    <text evidence="4">Binds a dinuclear copper A center per subunit.</text>
</comment>
<comment type="subunit">
    <text evidence="1 4">Component of the cytochrome c oxidase (complex IV, CIV), a multisubunit enzyme composed of 14 subunits. The complex is composed of a catalytic core of 3 subunits MT-CO1, MT-CO2 and MT-CO3, encoded in the mitochondrial DNA, and 11 supernumerary subunits COX4I, COX5A, COX5B, COX6A, COX6B, COX6C, COX7A, COX7B, COX7C, COX8 and NDUFA4, which are encoded in the nuclear genome. The complex exists as a monomer or a dimer and forms supercomplexes (SCs) in the inner mitochondrial membrane with NADH-ubiquinone oxidoreductase (complex I, CI) and ubiquinol-cytochrome c oxidoreductase (cytochrome b-c1 complex, complex III, CIII), resulting in different assemblies (supercomplex SCI(1)III(2)IV(1) and megacomplex MCI(2)III(2)IV(2)) (By similarity). Found in a complex with TMEM177, COA6, COX18, COX20, SCO1 and SCO2. Interacts with TMEM177 in a COX20-dependent manner. Interacts with COX20. Interacts with COX16 (By similarity).</text>
</comment>
<comment type="subcellular location">
    <subcellularLocation>
        <location evidence="4">Mitochondrion inner membrane</location>
        <topology evidence="4">Multi-pass membrane protein</topology>
    </subcellularLocation>
</comment>
<comment type="similarity">
    <text evidence="5">Belongs to the cytochrome c oxidase subunit 2 family.</text>
</comment>